<name>RL30_ECO45</name>
<gene>
    <name evidence="1" type="primary">rpmD</name>
    <name type="ordered locus">ECS88_3689</name>
</gene>
<organism>
    <name type="scientific">Escherichia coli O45:K1 (strain S88 / ExPEC)</name>
    <dbReference type="NCBI Taxonomy" id="585035"/>
    <lineage>
        <taxon>Bacteria</taxon>
        <taxon>Pseudomonadati</taxon>
        <taxon>Pseudomonadota</taxon>
        <taxon>Gammaproteobacteria</taxon>
        <taxon>Enterobacterales</taxon>
        <taxon>Enterobacteriaceae</taxon>
        <taxon>Escherichia</taxon>
    </lineage>
</organism>
<accession>B7MCR7</accession>
<proteinExistence type="inferred from homology"/>
<feature type="chain" id="PRO_1000144675" description="Large ribosomal subunit protein uL30">
    <location>
        <begin position="1"/>
        <end position="59"/>
    </location>
</feature>
<keyword id="KW-1185">Reference proteome</keyword>
<keyword id="KW-0687">Ribonucleoprotein</keyword>
<keyword id="KW-0689">Ribosomal protein</keyword>
<protein>
    <recommendedName>
        <fullName evidence="1">Large ribosomal subunit protein uL30</fullName>
    </recommendedName>
    <alternativeName>
        <fullName evidence="2">50S ribosomal protein L30</fullName>
    </alternativeName>
</protein>
<comment type="subunit">
    <text evidence="1">Part of the 50S ribosomal subunit.</text>
</comment>
<comment type="similarity">
    <text evidence="1">Belongs to the universal ribosomal protein uL30 family.</text>
</comment>
<evidence type="ECO:0000255" key="1">
    <source>
        <dbReference type="HAMAP-Rule" id="MF_01371"/>
    </source>
</evidence>
<evidence type="ECO:0000305" key="2"/>
<sequence>MAKTIKITQTRSAIGRLPKHKATLLGLGLRRIGHTVEREDTPAIRGMINAVSFMVKVEE</sequence>
<reference key="1">
    <citation type="journal article" date="2009" name="PLoS Genet.">
        <title>Organised genome dynamics in the Escherichia coli species results in highly diverse adaptive paths.</title>
        <authorList>
            <person name="Touchon M."/>
            <person name="Hoede C."/>
            <person name="Tenaillon O."/>
            <person name="Barbe V."/>
            <person name="Baeriswyl S."/>
            <person name="Bidet P."/>
            <person name="Bingen E."/>
            <person name="Bonacorsi S."/>
            <person name="Bouchier C."/>
            <person name="Bouvet O."/>
            <person name="Calteau A."/>
            <person name="Chiapello H."/>
            <person name="Clermont O."/>
            <person name="Cruveiller S."/>
            <person name="Danchin A."/>
            <person name="Diard M."/>
            <person name="Dossat C."/>
            <person name="Karoui M.E."/>
            <person name="Frapy E."/>
            <person name="Garry L."/>
            <person name="Ghigo J.M."/>
            <person name="Gilles A.M."/>
            <person name="Johnson J."/>
            <person name="Le Bouguenec C."/>
            <person name="Lescat M."/>
            <person name="Mangenot S."/>
            <person name="Martinez-Jehanne V."/>
            <person name="Matic I."/>
            <person name="Nassif X."/>
            <person name="Oztas S."/>
            <person name="Petit M.A."/>
            <person name="Pichon C."/>
            <person name="Rouy Z."/>
            <person name="Ruf C.S."/>
            <person name="Schneider D."/>
            <person name="Tourret J."/>
            <person name="Vacherie B."/>
            <person name="Vallenet D."/>
            <person name="Medigue C."/>
            <person name="Rocha E.P.C."/>
            <person name="Denamur E."/>
        </authorList>
    </citation>
    <scope>NUCLEOTIDE SEQUENCE [LARGE SCALE GENOMIC DNA]</scope>
    <source>
        <strain>S88 / ExPEC</strain>
    </source>
</reference>
<dbReference type="EMBL" id="CU928161">
    <property type="protein sequence ID" value="CAR04906.1"/>
    <property type="molecule type" value="Genomic_DNA"/>
</dbReference>
<dbReference type="RefSeq" id="WP_001140433.1">
    <property type="nucleotide sequence ID" value="NC_011742.1"/>
</dbReference>
<dbReference type="EMDB" id="EMD-7970"/>
<dbReference type="EMDB" id="EMD-8826"/>
<dbReference type="EMDB" id="EMD-8829"/>
<dbReference type="SMR" id="B7MCR7"/>
<dbReference type="IntAct" id="B7MCR7">
    <property type="interactions" value="1"/>
</dbReference>
<dbReference type="GeneID" id="93778685"/>
<dbReference type="KEGG" id="ecz:ECS88_3689"/>
<dbReference type="HOGENOM" id="CLU_131047_1_4_6"/>
<dbReference type="Proteomes" id="UP000000747">
    <property type="component" value="Chromosome"/>
</dbReference>
<dbReference type="GO" id="GO:0022625">
    <property type="term" value="C:cytosolic large ribosomal subunit"/>
    <property type="evidence" value="ECO:0007669"/>
    <property type="project" value="TreeGrafter"/>
</dbReference>
<dbReference type="GO" id="GO:0003735">
    <property type="term" value="F:structural constituent of ribosome"/>
    <property type="evidence" value="ECO:0007669"/>
    <property type="project" value="InterPro"/>
</dbReference>
<dbReference type="GO" id="GO:0006412">
    <property type="term" value="P:translation"/>
    <property type="evidence" value="ECO:0007669"/>
    <property type="project" value="UniProtKB-UniRule"/>
</dbReference>
<dbReference type="CDD" id="cd01658">
    <property type="entry name" value="Ribosomal_L30"/>
    <property type="match status" value="1"/>
</dbReference>
<dbReference type="FunFam" id="3.30.1390.20:FF:000001">
    <property type="entry name" value="50S ribosomal protein L30"/>
    <property type="match status" value="1"/>
</dbReference>
<dbReference type="Gene3D" id="3.30.1390.20">
    <property type="entry name" value="Ribosomal protein L30, ferredoxin-like fold domain"/>
    <property type="match status" value="1"/>
</dbReference>
<dbReference type="HAMAP" id="MF_01371_B">
    <property type="entry name" value="Ribosomal_uL30_B"/>
    <property type="match status" value="1"/>
</dbReference>
<dbReference type="InterPro" id="IPR036919">
    <property type="entry name" value="Ribo_uL30_ferredoxin-like_sf"/>
</dbReference>
<dbReference type="InterPro" id="IPR005996">
    <property type="entry name" value="Ribosomal_uL30_bac-type"/>
</dbReference>
<dbReference type="InterPro" id="IPR018038">
    <property type="entry name" value="Ribosomal_uL30_CS"/>
</dbReference>
<dbReference type="InterPro" id="IPR016082">
    <property type="entry name" value="Ribosomal_uL30_ferredoxin-like"/>
</dbReference>
<dbReference type="NCBIfam" id="TIGR01308">
    <property type="entry name" value="rpmD_bact"/>
    <property type="match status" value="1"/>
</dbReference>
<dbReference type="PANTHER" id="PTHR15892:SF2">
    <property type="entry name" value="LARGE RIBOSOMAL SUBUNIT PROTEIN UL30M"/>
    <property type="match status" value="1"/>
</dbReference>
<dbReference type="PANTHER" id="PTHR15892">
    <property type="entry name" value="MITOCHONDRIAL RIBOSOMAL PROTEIN L30"/>
    <property type="match status" value="1"/>
</dbReference>
<dbReference type="Pfam" id="PF00327">
    <property type="entry name" value="Ribosomal_L30"/>
    <property type="match status" value="1"/>
</dbReference>
<dbReference type="PIRSF" id="PIRSF002211">
    <property type="entry name" value="Ribosomal_L30_bac-type"/>
    <property type="match status" value="1"/>
</dbReference>
<dbReference type="SUPFAM" id="SSF55129">
    <property type="entry name" value="Ribosomal protein L30p/L7e"/>
    <property type="match status" value="1"/>
</dbReference>
<dbReference type="PROSITE" id="PS00634">
    <property type="entry name" value="RIBOSOMAL_L30"/>
    <property type="match status" value="1"/>
</dbReference>